<accession>A1AHM0</accession>
<evidence type="ECO:0000255" key="1">
    <source>
        <dbReference type="HAMAP-Rule" id="MF_01016"/>
    </source>
</evidence>
<evidence type="ECO:0000305" key="2"/>
<reference key="1">
    <citation type="journal article" date="2007" name="J. Bacteriol.">
        <title>The genome sequence of avian pathogenic Escherichia coli strain O1:K1:H7 shares strong similarities with human extraintestinal pathogenic E. coli genomes.</title>
        <authorList>
            <person name="Johnson T.J."/>
            <person name="Kariyawasam S."/>
            <person name="Wannemuehler Y."/>
            <person name="Mangiamele P."/>
            <person name="Johnson S.J."/>
            <person name="Doetkott C."/>
            <person name="Skyberg J.A."/>
            <person name="Lynne A.M."/>
            <person name="Johnson J.R."/>
            <person name="Nolan L.K."/>
        </authorList>
    </citation>
    <scope>NUCLEOTIDE SEQUENCE [LARGE SCALE GENOMIC DNA]</scope>
</reference>
<name>YIDE_ECOK1</name>
<dbReference type="EMBL" id="CP000468">
    <property type="protein sequence ID" value="ABJ03160.1"/>
    <property type="status" value="ALT_INIT"/>
    <property type="molecule type" value="Genomic_DNA"/>
</dbReference>
<dbReference type="RefSeq" id="WP_001279773.1">
    <property type="nucleotide sequence ID" value="NZ_CADILS010000011.1"/>
</dbReference>
<dbReference type="SMR" id="A1AHM0"/>
<dbReference type="KEGG" id="ecv:APECO1_2772"/>
<dbReference type="HOGENOM" id="CLU_035023_3_1_6"/>
<dbReference type="Proteomes" id="UP000008216">
    <property type="component" value="Chromosome"/>
</dbReference>
<dbReference type="GO" id="GO:0005886">
    <property type="term" value="C:plasma membrane"/>
    <property type="evidence" value="ECO:0007669"/>
    <property type="project" value="UniProtKB-SubCell"/>
</dbReference>
<dbReference type="GO" id="GO:0008324">
    <property type="term" value="F:monoatomic cation transmembrane transporter activity"/>
    <property type="evidence" value="ECO:0007669"/>
    <property type="project" value="InterPro"/>
</dbReference>
<dbReference type="GO" id="GO:0006813">
    <property type="term" value="P:potassium ion transport"/>
    <property type="evidence" value="ECO:0007669"/>
    <property type="project" value="InterPro"/>
</dbReference>
<dbReference type="FunFam" id="3.30.70.1450:FF:000004">
    <property type="entry name" value="Putative transport protein YidE"/>
    <property type="match status" value="1"/>
</dbReference>
<dbReference type="Gene3D" id="3.30.70.1450">
    <property type="entry name" value="Regulator of K+ conductance, C-terminal domain"/>
    <property type="match status" value="2"/>
</dbReference>
<dbReference type="HAMAP" id="MF_01016">
    <property type="entry name" value="YidE"/>
    <property type="match status" value="1"/>
</dbReference>
<dbReference type="InterPro" id="IPR050144">
    <property type="entry name" value="AAE_transporter"/>
</dbReference>
<dbReference type="InterPro" id="IPR006037">
    <property type="entry name" value="RCK_C"/>
</dbReference>
<dbReference type="InterPro" id="IPR036721">
    <property type="entry name" value="RCK_C_sf"/>
</dbReference>
<dbReference type="InterPro" id="IPR023018">
    <property type="entry name" value="Transpt_YidE_put"/>
</dbReference>
<dbReference type="InterPro" id="IPR006512">
    <property type="entry name" value="YidE_YbjL"/>
</dbReference>
<dbReference type="NCBIfam" id="NF003007">
    <property type="entry name" value="PRK03818.1"/>
    <property type="match status" value="1"/>
</dbReference>
<dbReference type="NCBIfam" id="TIGR01625">
    <property type="entry name" value="YidE_YbjL_dupl"/>
    <property type="match status" value="2"/>
</dbReference>
<dbReference type="PANTHER" id="PTHR30445">
    <property type="entry name" value="K(+)_H(+) ANTIPORTER SUBUNIT KHTT"/>
    <property type="match status" value="1"/>
</dbReference>
<dbReference type="PANTHER" id="PTHR30445:SF3">
    <property type="entry name" value="TRANSPORT PROTEIN YIDE-RELATED"/>
    <property type="match status" value="1"/>
</dbReference>
<dbReference type="Pfam" id="PF06826">
    <property type="entry name" value="Asp-Al_Ex"/>
    <property type="match status" value="2"/>
</dbReference>
<dbReference type="Pfam" id="PF02080">
    <property type="entry name" value="TrkA_C"/>
    <property type="match status" value="2"/>
</dbReference>
<dbReference type="SUPFAM" id="SSF116726">
    <property type="entry name" value="TrkA C-terminal domain-like"/>
    <property type="match status" value="2"/>
</dbReference>
<dbReference type="PROSITE" id="PS51202">
    <property type="entry name" value="RCK_C"/>
    <property type="match status" value="2"/>
</dbReference>
<organism>
    <name type="scientific">Escherichia coli O1:K1 / APEC</name>
    <dbReference type="NCBI Taxonomy" id="405955"/>
    <lineage>
        <taxon>Bacteria</taxon>
        <taxon>Pseudomonadati</taxon>
        <taxon>Pseudomonadota</taxon>
        <taxon>Gammaproteobacteria</taxon>
        <taxon>Enterobacterales</taxon>
        <taxon>Enterobacteriaceae</taxon>
        <taxon>Escherichia</taxon>
    </lineage>
</organism>
<comment type="subcellular location">
    <subcellularLocation>
        <location evidence="1">Cell membrane</location>
        <topology evidence="1">Multi-pass membrane protein</topology>
    </subcellularLocation>
</comment>
<comment type="similarity">
    <text evidence="1">Belongs to the AAE transporter (TC 2.A.81) family. YidE subfamily.</text>
</comment>
<comment type="sequence caution" evidence="2">
    <conflict type="erroneous initiation">
        <sequence resource="EMBL-CDS" id="ABJ03160"/>
    </conflict>
</comment>
<proteinExistence type="inferred from homology"/>
<sequence length="553" mass="58904">MSDIALTVSILALVAVVGLFIGNVKFRGVGLGIGGVLFGGIIVGHFVSQAGMTLSSDMLHVIQEFGLILFVYTIGIQVGPGFFASLRVSGLRLNLFAVLIVIIGGLVTAILHKLFDIPLPVVLGIFSGAVTNTPALGAGQQILRDLGTPMAMVDQMGMSYAMAYPFGICGILFTMWMLRVIFRVNVETEAQQHESTRTNGGALIRTINIRVENPNLHNLAIKDVPILNGDKVICSRLKREETLKVPSPETVIQLGDLLHLVGQPADLHNAQLVIGQEVDTSLSTKGTDLRVARVVVTNENVLGKRIRDLHFKERYDVVISRLNRAGVELVASSDISLQFGDILNLVGRPSAIDAVANVLGNAQQKLQQVQMLPVFIGIGLGVLLGSIPVFVPGFPAALKLGLAGGPLIMALILGRIGSIGKLYWFMPPSANLALRELGIVLFLSVVGLKSGGDFIHTLVDGEGLSWIGYGALITAVPLITVGILARMLAKMNYLTMCGMLAGSMTDPPALAFANNLHPTSGAAALSYATVYPLVMFLRIITPQLLAVLFWSIG</sequence>
<gene>
    <name evidence="1" type="primary">yidE</name>
    <name type="ordered locus">Ecok1_36660</name>
    <name type="ORF">APECO1_2772</name>
</gene>
<feature type="chain" id="PRO_0000329159" description="Putative transport protein YidE">
    <location>
        <begin position="1"/>
        <end position="553"/>
    </location>
</feature>
<feature type="transmembrane region" description="Helical" evidence="1">
    <location>
        <begin position="4"/>
        <end position="24"/>
    </location>
</feature>
<feature type="transmembrane region" description="Helical" evidence="1">
    <location>
        <begin position="28"/>
        <end position="48"/>
    </location>
</feature>
<feature type="transmembrane region" description="Helical" evidence="1">
    <location>
        <begin position="65"/>
        <end position="85"/>
    </location>
</feature>
<feature type="transmembrane region" description="Helical" evidence="1">
    <location>
        <begin position="95"/>
        <end position="115"/>
    </location>
</feature>
<feature type="transmembrane region" description="Helical" evidence="1">
    <location>
        <begin position="158"/>
        <end position="178"/>
    </location>
</feature>
<feature type="transmembrane region" description="Helical" evidence="1">
    <location>
        <begin position="371"/>
        <end position="391"/>
    </location>
</feature>
<feature type="transmembrane region" description="Helical" evidence="1">
    <location>
        <begin position="393"/>
        <end position="413"/>
    </location>
</feature>
<feature type="transmembrane region" description="Helical" evidence="1">
    <location>
        <begin position="439"/>
        <end position="459"/>
    </location>
</feature>
<feature type="transmembrane region" description="Helical" evidence="1">
    <location>
        <begin position="464"/>
        <end position="484"/>
    </location>
</feature>
<feature type="transmembrane region" description="Helical" evidence="1">
    <location>
        <begin position="493"/>
        <end position="513"/>
    </location>
</feature>
<feature type="transmembrane region" description="Helical" evidence="1">
    <location>
        <begin position="533"/>
        <end position="553"/>
    </location>
</feature>
<feature type="domain" description="RCK C-terminal 1" evidence="1">
    <location>
        <begin position="191"/>
        <end position="276"/>
    </location>
</feature>
<feature type="domain" description="RCK C-terminal 2" evidence="1">
    <location>
        <begin position="279"/>
        <end position="361"/>
    </location>
</feature>
<protein>
    <recommendedName>
        <fullName evidence="1">Putative transport protein YidE</fullName>
    </recommendedName>
</protein>
<keyword id="KW-1003">Cell membrane</keyword>
<keyword id="KW-0472">Membrane</keyword>
<keyword id="KW-1185">Reference proteome</keyword>
<keyword id="KW-0677">Repeat</keyword>
<keyword id="KW-0812">Transmembrane</keyword>
<keyword id="KW-1133">Transmembrane helix</keyword>
<keyword id="KW-0813">Transport</keyword>